<evidence type="ECO:0000255" key="1">
    <source>
        <dbReference type="HAMAP-Rule" id="MF_00366"/>
    </source>
</evidence>
<evidence type="ECO:0000256" key="2">
    <source>
        <dbReference type="SAM" id="MobiDB-lite"/>
    </source>
</evidence>
<gene>
    <name evidence="1" type="primary">rpoZ</name>
    <name type="ordered locus">SACE_2101</name>
</gene>
<reference key="1">
    <citation type="journal article" date="2007" name="Nat. Biotechnol.">
        <title>Complete genome sequence of the erythromycin-producing bacterium Saccharopolyspora erythraea NRRL23338.</title>
        <authorList>
            <person name="Oliynyk M."/>
            <person name="Samborskyy M."/>
            <person name="Lester J.B."/>
            <person name="Mironenko T."/>
            <person name="Scott N."/>
            <person name="Dickens S."/>
            <person name="Haydock S.F."/>
            <person name="Leadlay P.F."/>
        </authorList>
    </citation>
    <scope>NUCLEOTIDE SEQUENCE [LARGE SCALE GENOMIC DNA]</scope>
    <source>
        <strain>ATCC 11635 / DSM 40517 / JCM 4748 / NBRC 13426 / NCIMB 8594 / NRRL 2338</strain>
    </source>
</reference>
<name>RPOZ_SACEN</name>
<organism>
    <name type="scientific">Saccharopolyspora erythraea (strain ATCC 11635 / DSM 40517 / JCM 4748 / NBRC 13426 / NCIMB 8594 / NRRL 2338)</name>
    <dbReference type="NCBI Taxonomy" id="405948"/>
    <lineage>
        <taxon>Bacteria</taxon>
        <taxon>Bacillati</taxon>
        <taxon>Actinomycetota</taxon>
        <taxon>Actinomycetes</taxon>
        <taxon>Pseudonocardiales</taxon>
        <taxon>Pseudonocardiaceae</taxon>
        <taxon>Saccharopolyspora</taxon>
    </lineage>
</organism>
<accession>A4FBI2</accession>
<sequence length="97" mass="10504">MSTPNALAAFNSSPSLNAPEGITNPPIDDLLEQVSSKYALVIYSAKRARQINDYYAQLGEGLLEYVGPLVEPGPREKPLSIALREIHAGVLEHTEGE</sequence>
<protein>
    <recommendedName>
        <fullName evidence="1">DNA-directed RNA polymerase subunit omega</fullName>
        <shortName evidence="1">RNAP omega subunit</shortName>
        <ecNumber evidence="1">2.7.7.6</ecNumber>
    </recommendedName>
    <alternativeName>
        <fullName evidence="1">RNA polymerase omega subunit</fullName>
    </alternativeName>
    <alternativeName>
        <fullName evidence="1">Transcriptase subunit omega</fullName>
    </alternativeName>
</protein>
<proteinExistence type="inferred from homology"/>
<dbReference type="EC" id="2.7.7.6" evidence="1"/>
<dbReference type="EMBL" id="AM420293">
    <property type="protein sequence ID" value="CAM01407.1"/>
    <property type="molecule type" value="Genomic_DNA"/>
</dbReference>
<dbReference type="RefSeq" id="WP_009943020.1">
    <property type="nucleotide sequence ID" value="NC_009142.1"/>
</dbReference>
<dbReference type="SMR" id="A4FBI2"/>
<dbReference type="STRING" id="405948.SACE_2101"/>
<dbReference type="KEGG" id="sen:SACE_2101"/>
<dbReference type="eggNOG" id="COG1758">
    <property type="taxonomic scope" value="Bacteria"/>
</dbReference>
<dbReference type="HOGENOM" id="CLU_125406_1_1_11"/>
<dbReference type="OrthoDB" id="8481372at2"/>
<dbReference type="Proteomes" id="UP000006728">
    <property type="component" value="Chromosome"/>
</dbReference>
<dbReference type="GO" id="GO:0000428">
    <property type="term" value="C:DNA-directed RNA polymerase complex"/>
    <property type="evidence" value="ECO:0007669"/>
    <property type="project" value="UniProtKB-KW"/>
</dbReference>
<dbReference type="GO" id="GO:0003677">
    <property type="term" value="F:DNA binding"/>
    <property type="evidence" value="ECO:0007669"/>
    <property type="project" value="UniProtKB-UniRule"/>
</dbReference>
<dbReference type="GO" id="GO:0003899">
    <property type="term" value="F:DNA-directed RNA polymerase activity"/>
    <property type="evidence" value="ECO:0007669"/>
    <property type="project" value="UniProtKB-UniRule"/>
</dbReference>
<dbReference type="GO" id="GO:0006351">
    <property type="term" value="P:DNA-templated transcription"/>
    <property type="evidence" value="ECO:0007669"/>
    <property type="project" value="UniProtKB-UniRule"/>
</dbReference>
<dbReference type="Gene3D" id="3.90.940.10">
    <property type="match status" value="1"/>
</dbReference>
<dbReference type="HAMAP" id="MF_00366">
    <property type="entry name" value="RNApol_bact_RpoZ"/>
    <property type="match status" value="1"/>
</dbReference>
<dbReference type="InterPro" id="IPR003716">
    <property type="entry name" value="DNA-dir_RNA_pol_omega"/>
</dbReference>
<dbReference type="InterPro" id="IPR006110">
    <property type="entry name" value="Pol_omega/Rpo6/RPB6"/>
</dbReference>
<dbReference type="InterPro" id="IPR036161">
    <property type="entry name" value="RPB6/omega-like_sf"/>
</dbReference>
<dbReference type="NCBIfam" id="TIGR00690">
    <property type="entry name" value="rpoZ"/>
    <property type="match status" value="1"/>
</dbReference>
<dbReference type="PANTHER" id="PTHR34476">
    <property type="entry name" value="DNA-DIRECTED RNA POLYMERASE SUBUNIT OMEGA"/>
    <property type="match status" value="1"/>
</dbReference>
<dbReference type="PANTHER" id="PTHR34476:SF1">
    <property type="entry name" value="DNA-DIRECTED RNA POLYMERASE SUBUNIT OMEGA"/>
    <property type="match status" value="1"/>
</dbReference>
<dbReference type="Pfam" id="PF01192">
    <property type="entry name" value="RNA_pol_Rpb6"/>
    <property type="match status" value="1"/>
</dbReference>
<dbReference type="SMART" id="SM01409">
    <property type="entry name" value="RNA_pol_Rpb6"/>
    <property type="match status" value="1"/>
</dbReference>
<dbReference type="SUPFAM" id="SSF63562">
    <property type="entry name" value="RPB6/omega subunit-like"/>
    <property type="match status" value="1"/>
</dbReference>
<keyword id="KW-0240">DNA-directed RNA polymerase</keyword>
<keyword id="KW-0548">Nucleotidyltransferase</keyword>
<keyword id="KW-1185">Reference proteome</keyword>
<keyword id="KW-0804">Transcription</keyword>
<keyword id="KW-0808">Transferase</keyword>
<comment type="function">
    <text evidence="1">Promotes RNA polymerase assembly. Latches the N- and C-terminal regions of the beta' subunit thereby facilitating its interaction with the beta and alpha subunits.</text>
</comment>
<comment type="catalytic activity">
    <reaction evidence="1">
        <text>RNA(n) + a ribonucleoside 5'-triphosphate = RNA(n+1) + diphosphate</text>
        <dbReference type="Rhea" id="RHEA:21248"/>
        <dbReference type="Rhea" id="RHEA-COMP:14527"/>
        <dbReference type="Rhea" id="RHEA-COMP:17342"/>
        <dbReference type="ChEBI" id="CHEBI:33019"/>
        <dbReference type="ChEBI" id="CHEBI:61557"/>
        <dbReference type="ChEBI" id="CHEBI:140395"/>
        <dbReference type="EC" id="2.7.7.6"/>
    </reaction>
</comment>
<comment type="subunit">
    <text evidence="1">The RNAP catalytic core consists of 2 alpha, 1 beta, 1 beta' and 1 omega subunit. When a sigma factor is associated with the core the holoenzyme is formed, which can initiate transcription.</text>
</comment>
<comment type="similarity">
    <text evidence="1">Belongs to the RNA polymerase subunit omega family.</text>
</comment>
<feature type="chain" id="PRO_1000006005" description="DNA-directed RNA polymerase subunit omega">
    <location>
        <begin position="1"/>
        <end position="97"/>
    </location>
</feature>
<feature type="region of interest" description="Disordered" evidence="2">
    <location>
        <begin position="1"/>
        <end position="21"/>
    </location>
</feature>
<feature type="compositionally biased region" description="Polar residues" evidence="2">
    <location>
        <begin position="1"/>
        <end position="16"/>
    </location>
</feature>